<keyword id="KW-0444">Lipid biosynthesis</keyword>
<keyword id="KW-0443">Lipid metabolism</keyword>
<keyword id="KW-0472">Membrane</keyword>
<keyword id="KW-0594">Phospholipid biosynthesis</keyword>
<keyword id="KW-1208">Phospholipid metabolism</keyword>
<keyword id="KW-1185">Reference proteome</keyword>
<keyword id="KW-0808">Transferase</keyword>
<keyword id="KW-0812">Transmembrane</keyword>
<keyword id="KW-1133">Transmembrane helix</keyword>
<comment type="function">
    <text evidence="3">Involved in the lipid biosynthesis. Catalyzes the formation of unsaturated archaetidylserine from CDP-unsaturated archaeol and L-serine. Activity with ester-linked substrate analogs containing straight aliphatic chains (typical bacterial substrates) is two to three times higher than that with the corresponding ether-type substrate (typical archaeal substrates). Both enantiomers of CDP-unsaturated archaeols with ether-linked geranylgeranyl chains and CDP-saturated archaeol with ether-linked phytanyl chains are similarly active. The enzyme also accepts D-serine, although activity is only about third of that with L-serine.</text>
</comment>
<comment type="catalytic activity">
    <reaction evidence="3">
        <text>CDP-2,3-bis-O-(geranylgeranyl)-sn-glycerol + L-serine = archaetidylserine + CMP + H(+)</text>
        <dbReference type="Rhea" id="RHEA:35439"/>
        <dbReference type="ChEBI" id="CHEBI:15378"/>
        <dbReference type="ChEBI" id="CHEBI:33384"/>
        <dbReference type="ChEBI" id="CHEBI:58838"/>
        <dbReference type="ChEBI" id="CHEBI:60377"/>
        <dbReference type="ChEBI" id="CHEBI:71517"/>
        <dbReference type="EC" id="2.7.8.38"/>
    </reaction>
</comment>
<comment type="catalytic activity">
    <reaction evidence="3">
        <text>CDP-2,3-bis-O-(phytanyl)-sn-glycerol + L-serine = 2,3-bis-O-phytanyl-sn-glycero-3-phospho-L-serine + CMP + H(+)</text>
        <dbReference type="Rhea" id="RHEA:37367"/>
        <dbReference type="ChEBI" id="CHEBI:15378"/>
        <dbReference type="ChEBI" id="CHEBI:33384"/>
        <dbReference type="ChEBI" id="CHEBI:60377"/>
        <dbReference type="ChEBI" id="CHEBI:74004"/>
        <dbReference type="ChEBI" id="CHEBI:74853"/>
        <dbReference type="EC" id="2.7.8.38"/>
    </reaction>
</comment>
<comment type="activity regulation">
    <text evidence="3">Activated by Mn(2+) ions.</text>
</comment>
<comment type="biophysicochemical properties">
    <phDependence>
        <text evidence="3">Optimum pH is between 8 and 8.5.</text>
    </phDependence>
    <temperatureDependence>
        <text evidence="3">Optimum temperature is 60 degrees Celsius.</text>
    </temperatureDependence>
</comment>
<comment type="pathway">
    <text>Membrane lipid metabolism; glycerophospholipid metabolism.</text>
</comment>
<comment type="subcellular location">
    <subcellularLocation>
        <location evidence="5">Membrane</location>
        <topology evidence="1">Multi-pass membrane protein</topology>
    </subcellularLocation>
</comment>
<comment type="similarity">
    <text evidence="4">Belongs to the CDP-alcohol phosphatidyltransferase class-I family.</text>
</comment>
<organism>
    <name type="scientific">Methanothermobacter thermautotrophicus (strain ATCC 29096 / DSM 1053 / JCM 10044 / NBRC 100330 / Delta H)</name>
    <name type="common">Methanobacterium thermoautotrophicum</name>
    <dbReference type="NCBI Taxonomy" id="187420"/>
    <lineage>
        <taxon>Archaea</taxon>
        <taxon>Methanobacteriati</taxon>
        <taxon>Methanobacteriota</taxon>
        <taxon>Methanomada group</taxon>
        <taxon>Methanobacteria</taxon>
        <taxon>Methanobacteriales</taxon>
        <taxon>Methanobacteriaceae</taxon>
        <taxon>Methanothermobacter</taxon>
    </lineage>
</organism>
<gene>
    <name type="ordered locus">MTH_1027</name>
</gene>
<feature type="chain" id="PRO_0000422924" description="Archaetidylserine synthase">
    <location>
        <begin position="1"/>
        <end position="233"/>
    </location>
</feature>
<feature type="transmembrane region" description="Helical" evidence="2">
    <location>
        <begin position="7"/>
        <end position="27"/>
    </location>
</feature>
<feature type="transmembrane region" description="Helical" evidence="2">
    <location>
        <begin position="29"/>
        <end position="49"/>
    </location>
</feature>
<feature type="transmembrane region" description="Helical" evidence="2">
    <location>
        <begin position="75"/>
        <end position="95"/>
    </location>
</feature>
<feature type="transmembrane region" description="Helical" evidence="2">
    <location>
        <begin position="102"/>
        <end position="122"/>
    </location>
</feature>
<feature type="transmembrane region" description="Helical" evidence="2">
    <location>
        <begin position="126"/>
        <end position="146"/>
    </location>
</feature>
<feature type="transmembrane region" description="Helical" evidence="2">
    <location>
        <begin position="147"/>
        <end position="167"/>
    </location>
</feature>
<feature type="transmembrane region" description="Helical" evidence="2">
    <location>
        <begin position="180"/>
        <end position="200"/>
    </location>
</feature>
<feature type="transmembrane region" description="Helical" evidence="2">
    <location>
        <begin position="206"/>
        <end position="226"/>
    </location>
</feature>
<protein>
    <recommendedName>
        <fullName>Archaetidylserine synthase</fullName>
        <ecNumber>2.7.8.38</ecNumber>
    </recommendedName>
    <alternativeName>
        <fullName>CDP-2,3-di-O-geranylgeranyl-sn-glycerol:L-serine O-archaetidyltransferase</fullName>
    </alternativeName>
</protein>
<reference key="1">
    <citation type="journal article" date="1997" name="J. Bacteriol.">
        <title>Complete genome sequence of Methanobacterium thermoautotrophicum deltaH: functional analysis and comparative genomics.</title>
        <authorList>
            <person name="Smith D.R."/>
            <person name="Doucette-Stamm L.A."/>
            <person name="Deloughery C."/>
            <person name="Lee H.-M."/>
            <person name="Dubois J."/>
            <person name="Aldredge T."/>
            <person name="Bashirzadeh R."/>
            <person name="Blakely D."/>
            <person name="Cook R."/>
            <person name="Gilbert K."/>
            <person name="Harrison D."/>
            <person name="Hoang L."/>
            <person name="Keagle P."/>
            <person name="Lumm W."/>
            <person name="Pothier B."/>
            <person name="Qiu D."/>
            <person name="Spadafora R."/>
            <person name="Vicare R."/>
            <person name="Wang Y."/>
            <person name="Wierzbowski J."/>
            <person name="Gibson R."/>
            <person name="Jiwani N."/>
            <person name="Caruso A."/>
            <person name="Bush D."/>
            <person name="Safer H."/>
            <person name="Patwell D."/>
            <person name="Prabhakar S."/>
            <person name="McDougall S."/>
            <person name="Shimer G."/>
            <person name="Goyal A."/>
            <person name="Pietrovski S."/>
            <person name="Church G.M."/>
            <person name="Daniels C.J."/>
            <person name="Mao J.-I."/>
            <person name="Rice P."/>
            <person name="Noelling J."/>
            <person name="Reeve J.N."/>
        </authorList>
    </citation>
    <scope>NUCLEOTIDE SEQUENCE [LARGE SCALE GENOMIC DNA]</scope>
    <source>
        <strain>ATCC 29096 / DSM 1053 / JCM 10044 / NBRC 100330 / Delta H</strain>
    </source>
</reference>
<reference key="2">
    <citation type="journal article" date="2003" name="J. Bacteriol.">
        <title>CDP-2,3-Di-O-geranylgeranyl-sn-glycerol:L-serine O-archaetidyltransferase (archaetidylserine synthase) in the methanogenic archaeon Methanothermobacter thermautotrophicus.</title>
        <authorList>
            <person name="Morii H."/>
            <person name="Koga Y."/>
        </authorList>
    </citation>
    <scope>FUNCTION</scope>
    <scope>CATALYTIC ACTIVITY</scope>
    <scope>SUBCELLULAR LOCATION</scope>
    <scope>ACTIVITY REGULATION</scope>
    <scope>BIOPHYSICOCHEMICAL PROPERTIES</scope>
    <scope>SUBSTRATE SPECIFICITY</scope>
</reference>
<sequence length="233" mass="24618">MMNDKKITSFIALPDLLSMLNASSGYLSILLSIDGSLNAACILMLLAVLFDSLDGWVARKTGRIDIHGFGKNMDSLSDVISFGVAPAILIYSAAVDFRYINILVGPLIVLCGILRLSRFNVLTGGGKNFTGLPIPVAAVTISSFYLTGFYSELSAAFIMIAVSVLMISSIEYPRVDGMGASTALILIIATIISVAAVEILQAASVVAGPVAIILFIATLTYIAVPILPKRDVI</sequence>
<name>ARSS_METTH</name>
<evidence type="ECO:0000250" key="1"/>
<evidence type="ECO:0000255" key="2"/>
<evidence type="ECO:0000269" key="3">
    <source>
    </source>
</evidence>
<evidence type="ECO:0000305" key="4"/>
<evidence type="ECO:0000305" key="5">
    <source>
    </source>
</evidence>
<accession>O27106</accession>
<proteinExistence type="evidence at protein level"/>
<dbReference type="EC" id="2.7.8.38"/>
<dbReference type="EMBL" id="AE000666">
    <property type="protein sequence ID" value="AAB85523.1"/>
    <property type="molecule type" value="Genomic_DNA"/>
</dbReference>
<dbReference type="PIR" id="A69004">
    <property type="entry name" value="A69004"/>
</dbReference>
<dbReference type="SMR" id="O27106"/>
<dbReference type="FunCoup" id="O27106">
    <property type="interactions" value="10"/>
</dbReference>
<dbReference type="STRING" id="187420.MTH_1027"/>
<dbReference type="PaxDb" id="187420-MTH_1027"/>
<dbReference type="EnsemblBacteria" id="AAB85523">
    <property type="protein sequence ID" value="AAB85523"/>
    <property type="gene ID" value="MTH_1027"/>
</dbReference>
<dbReference type="KEGG" id="mth:MTH_1027"/>
<dbReference type="PATRIC" id="fig|187420.15.peg.1010"/>
<dbReference type="HOGENOM" id="CLU_049944_3_1_2"/>
<dbReference type="InParanoid" id="O27106"/>
<dbReference type="BioCyc" id="MetaCyc:MONOMER-14511"/>
<dbReference type="BRENDA" id="2.7.8.38">
    <property type="organism ID" value="3256"/>
</dbReference>
<dbReference type="UniPathway" id="UPA00940"/>
<dbReference type="Proteomes" id="UP000005223">
    <property type="component" value="Chromosome"/>
</dbReference>
<dbReference type="GO" id="GO:0016020">
    <property type="term" value="C:membrane"/>
    <property type="evidence" value="ECO:0007669"/>
    <property type="project" value="UniProtKB-SubCell"/>
</dbReference>
<dbReference type="GO" id="GO:0043761">
    <property type="term" value="F:archaetidylserine synthase activity"/>
    <property type="evidence" value="ECO:0000314"/>
    <property type="project" value="UniProtKB"/>
</dbReference>
<dbReference type="GO" id="GO:0006650">
    <property type="term" value="P:glycerophospholipid metabolic process"/>
    <property type="evidence" value="ECO:0007669"/>
    <property type="project" value="UniProtKB-UniPathway"/>
</dbReference>
<dbReference type="GO" id="GO:0008654">
    <property type="term" value="P:phospholipid biosynthetic process"/>
    <property type="evidence" value="ECO:0000314"/>
    <property type="project" value="UniProtKB"/>
</dbReference>
<dbReference type="Gene3D" id="1.20.120.1760">
    <property type="match status" value="1"/>
</dbReference>
<dbReference type="InterPro" id="IPR004533">
    <property type="entry name" value="CDP-diaglyc--ser_O-PTrfase"/>
</dbReference>
<dbReference type="InterPro" id="IPR000462">
    <property type="entry name" value="CDP-OH_P_trans"/>
</dbReference>
<dbReference type="InterPro" id="IPR043130">
    <property type="entry name" value="CDP-OH_PTrfase_TM_dom"/>
</dbReference>
<dbReference type="NCBIfam" id="NF038087">
    <property type="entry name" value="arch_ser_synth"/>
    <property type="match status" value="1"/>
</dbReference>
<dbReference type="NCBIfam" id="TIGR00473">
    <property type="entry name" value="pssA"/>
    <property type="match status" value="1"/>
</dbReference>
<dbReference type="Pfam" id="PF01066">
    <property type="entry name" value="CDP-OH_P_transf"/>
    <property type="match status" value="1"/>
</dbReference>